<accession>Q6EPN8</accession>
<accession>A3AA46</accession>
<accession>B9F1T6</accession>
<proteinExistence type="evidence at transcript level"/>
<keyword id="KW-0256">Endoplasmic reticulum</keyword>
<keyword id="KW-0378">Hydrolase</keyword>
<keyword id="KW-0472">Membrane</keyword>
<keyword id="KW-0479">Metal-binding</keyword>
<keyword id="KW-0482">Metalloprotease</keyword>
<keyword id="KW-0645">Protease</keyword>
<keyword id="KW-1185">Reference proteome</keyword>
<keyword id="KW-0812">Transmembrane</keyword>
<keyword id="KW-1133">Transmembrane helix</keyword>
<keyword id="KW-0862">Zinc</keyword>
<comment type="function">
    <text evidence="1">Proteolytically removes the C-terminal three residues of farnesylated proteins.</text>
</comment>
<comment type="catalytic activity">
    <reaction>
        <text>Hydrolyzes the peptide bond -P2-(S-farnesyl or geranylgeranyl)C-P1'-P2'-P3'-COOH where P1' and P2' are amino acids with aliphatic side chains and P3' is any C-terminal residue.</text>
        <dbReference type="EC" id="3.4.24.84"/>
    </reaction>
</comment>
<comment type="cofactor">
    <cofactor evidence="1">
        <name>Zn(2+)</name>
        <dbReference type="ChEBI" id="CHEBI:29105"/>
    </cofactor>
    <text evidence="1">Binds 1 zinc ion per subunit.</text>
</comment>
<comment type="subcellular location">
    <subcellularLocation>
        <location evidence="1">Endoplasmic reticulum membrane</location>
        <topology evidence="1">Multi-pass membrane protein</topology>
    </subcellularLocation>
</comment>
<comment type="similarity">
    <text evidence="3">Belongs to the peptidase M48A family.</text>
</comment>
<organism>
    <name type="scientific">Oryza sativa subsp. japonica</name>
    <name type="common">Rice</name>
    <dbReference type="NCBI Taxonomy" id="39947"/>
    <lineage>
        <taxon>Eukaryota</taxon>
        <taxon>Viridiplantae</taxon>
        <taxon>Streptophyta</taxon>
        <taxon>Embryophyta</taxon>
        <taxon>Tracheophyta</taxon>
        <taxon>Spermatophyta</taxon>
        <taxon>Magnoliopsida</taxon>
        <taxon>Liliopsida</taxon>
        <taxon>Poales</taxon>
        <taxon>Poaceae</taxon>
        <taxon>BOP clade</taxon>
        <taxon>Oryzoideae</taxon>
        <taxon>Oryzeae</taxon>
        <taxon>Oryzinae</taxon>
        <taxon>Oryza</taxon>
        <taxon>Oryza sativa</taxon>
    </lineage>
</organism>
<protein>
    <recommendedName>
        <fullName>CAAX prenyl protease 1 homolog</fullName>
        <ecNumber>3.4.24.84</ecNumber>
    </recommendedName>
    <alternativeName>
        <fullName>Farnesylated proteins-converting enzyme 1</fullName>
        <shortName>FACE-1</shortName>
    </alternativeName>
    <alternativeName>
        <fullName>Prenyl protein-specific endoprotease 1</fullName>
    </alternativeName>
    <alternativeName>
        <fullName>Zinc metalloproteinase Ste24 homolog</fullName>
    </alternativeName>
</protein>
<evidence type="ECO:0000250" key="1"/>
<evidence type="ECO:0000255" key="2"/>
<evidence type="ECO:0000305" key="3"/>
<evidence type="ECO:0000312" key="4">
    <source>
        <dbReference type="EMBL" id="EEE57578.1"/>
    </source>
</evidence>
<gene>
    <name type="primary">FACE1</name>
    <name type="synonym">STE24</name>
    <name type="ordered locus">Os02g0680400</name>
    <name type="ordered locus">LOC_Os02g45650</name>
    <name type="ORF">OsJ_007668</name>
    <name evidence="4" type="ORF">OsJ_07930</name>
    <name type="ORF">P0663F07.25</name>
</gene>
<reference key="1">
    <citation type="journal article" date="2005" name="Nature">
        <title>The map-based sequence of the rice genome.</title>
        <authorList>
            <consortium name="International rice genome sequencing project (IRGSP)"/>
        </authorList>
    </citation>
    <scope>NUCLEOTIDE SEQUENCE [LARGE SCALE GENOMIC DNA]</scope>
    <source>
        <strain>cv. Nipponbare</strain>
    </source>
</reference>
<reference key="2">
    <citation type="journal article" date="2008" name="Nucleic Acids Res.">
        <title>The rice annotation project database (RAP-DB): 2008 update.</title>
        <authorList>
            <consortium name="The rice annotation project (RAP)"/>
        </authorList>
    </citation>
    <scope>GENOME REANNOTATION</scope>
    <source>
        <strain>cv. Nipponbare</strain>
    </source>
</reference>
<reference key="3">
    <citation type="journal article" date="2013" name="Rice">
        <title>Improvement of the Oryza sativa Nipponbare reference genome using next generation sequence and optical map data.</title>
        <authorList>
            <person name="Kawahara Y."/>
            <person name="de la Bastide M."/>
            <person name="Hamilton J.P."/>
            <person name="Kanamori H."/>
            <person name="McCombie W.R."/>
            <person name="Ouyang S."/>
            <person name="Schwartz D.C."/>
            <person name="Tanaka T."/>
            <person name="Wu J."/>
            <person name="Zhou S."/>
            <person name="Childs K.L."/>
            <person name="Davidson R.M."/>
            <person name="Lin H."/>
            <person name="Quesada-Ocampo L."/>
            <person name="Vaillancourt B."/>
            <person name="Sakai H."/>
            <person name="Lee S.S."/>
            <person name="Kim J."/>
            <person name="Numa H."/>
            <person name="Itoh T."/>
            <person name="Buell C.R."/>
            <person name="Matsumoto T."/>
        </authorList>
    </citation>
    <scope>GENOME REANNOTATION</scope>
    <source>
        <strain>cv. Nipponbare</strain>
    </source>
</reference>
<reference key="4">
    <citation type="journal article" date="2005" name="PLoS Biol.">
        <title>The genomes of Oryza sativa: a history of duplications.</title>
        <authorList>
            <person name="Yu J."/>
            <person name="Wang J."/>
            <person name="Lin W."/>
            <person name="Li S."/>
            <person name="Li H."/>
            <person name="Zhou J."/>
            <person name="Ni P."/>
            <person name="Dong W."/>
            <person name="Hu S."/>
            <person name="Zeng C."/>
            <person name="Zhang J."/>
            <person name="Zhang Y."/>
            <person name="Li R."/>
            <person name="Xu Z."/>
            <person name="Li S."/>
            <person name="Li X."/>
            <person name="Zheng H."/>
            <person name="Cong L."/>
            <person name="Lin L."/>
            <person name="Yin J."/>
            <person name="Geng J."/>
            <person name="Li G."/>
            <person name="Shi J."/>
            <person name="Liu J."/>
            <person name="Lv H."/>
            <person name="Li J."/>
            <person name="Wang J."/>
            <person name="Deng Y."/>
            <person name="Ran L."/>
            <person name="Shi X."/>
            <person name="Wang X."/>
            <person name="Wu Q."/>
            <person name="Li C."/>
            <person name="Ren X."/>
            <person name="Wang J."/>
            <person name="Wang X."/>
            <person name="Li D."/>
            <person name="Liu D."/>
            <person name="Zhang X."/>
            <person name="Ji Z."/>
            <person name="Zhao W."/>
            <person name="Sun Y."/>
            <person name="Zhang Z."/>
            <person name="Bao J."/>
            <person name="Han Y."/>
            <person name="Dong L."/>
            <person name="Ji J."/>
            <person name="Chen P."/>
            <person name="Wu S."/>
            <person name="Liu J."/>
            <person name="Xiao Y."/>
            <person name="Bu D."/>
            <person name="Tan J."/>
            <person name="Yang L."/>
            <person name="Ye C."/>
            <person name="Zhang J."/>
            <person name="Xu J."/>
            <person name="Zhou Y."/>
            <person name="Yu Y."/>
            <person name="Zhang B."/>
            <person name="Zhuang S."/>
            <person name="Wei H."/>
            <person name="Liu B."/>
            <person name="Lei M."/>
            <person name="Yu H."/>
            <person name="Li Y."/>
            <person name="Xu H."/>
            <person name="Wei S."/>
            <person name="He X."/>
            <person name="Fang L."/>
            <person name="Zhang Z."/>
            <person name="Zhang Y."/>
            <person name="Huang X."/>
            <person name="Su Z."/>
            <person name="Tong W."/>
            <person name="Li J."/>
            <person name="Tong Z."/>
            <person name="Li S."/>
            <person name="Ye J."/>
            <person name="Wang L."/>
            <person name="Fang L."/>
            <person name="Lei T."/>
            <person name="Chen C.-S."/>
            <person name="Chen H.-C."/>
            <person name="Xu Z."/>
            <person name="Li H."/>
            <person name="Huang H."/>
            <person name="Zhang F."/>
            <person name="Xu H."/>
            <person name="Li N."/>
            <person name="Zhao C."/>
            <person name="Li S."/>
            <person name="Dong L."/>
            <person name="Huang Y."/>
            <person name="Li L."/>
            <person name="Xi Y."/>
            <person name="Qi Q."/>
            <person name="Li W."/>
            <person name="Zhang B."/>
            <person name="Hu W."/>
            <person name="Zhang Y."/>
            <person name="Tian X."/>
            <person name="Jiao Y."/>
            <person name="Liang X."/>
            <person name="Jin J."/>
            <person name="Gao L."/>
            <person name="Zheng W."/>
            <person name="Hao B."/>
            <person name="Liu S.-M."/>
            <person name="Wang W."/>
            <person name="Yuan L."/>
            <person name="Cao M."/>
            <person name="McDermott J."/>
            <person name="Samudrala R."/>
            <person name="Wang J."/>
            <person name="Wong G.K.-S."/>
            <person name="Yang H."/>
        </authorList>
    </citation>
    <scope>NUCLEOTIDE SEQUENCE [LARGE SCALE GENOMIC DNA]</scope>
    <source>
        <strain>cv. Nipponbare</strain>
    </source>
</reference>
<reference key="5">
    <citation type="journal article" date="2003" name="Science">
        <title>Collection, mapping, and annotation of over 28,000 cDNA clones from japonica rice.</title>
        <authorList>
            <consortium name="The rice full-length cDNA consortium"/>
        </authorList>
    </citation>
    <scope>NUCLEOTIDE SEQUENCE [LARGE SCALE MRNA]</scope>
    <source>
        <strain>cv. Nipponbare</strain>
    </source>
</reference>
<dbReference type="EC" id="3.4.24.84"/>
<dbReference type="EMBL" id="AP005823">
    <property type="protein sequence ID" value="BAD29382.1"/>
    <property type="molecule type" value="Genomic_DNA"/>
</dbReference>
<dbReference type="EMBL" id="AP008208">
    <property type="protein sequence ID" value="BAF09653.1"/>
    <property type="molecule type" value="Genomic_DNA"/>
</dbReference>
<dbReference type="EMBL" id="AP014958">
    <property type="protein sequence ID" value="BAS80294.1"/>
    <property type="molecule type" value="Genomic_DNA"/>
</dbReference>
<dbReference type="EMBL" id="CM000139">
    <property type="protein sequence ID" value="EEE57578.1"/>
    <property type="molecule type" value="Genomic_DNA"/>
</dbReference>
<dbReference type="EMBL" id="AK102210">
    <property type="status" value="NOT_ANNOTATED_CDS"/>
    <property type="molecule type" value="mRNA"/>
</dbReference>
<dbReference type="RefSeq" id="XP_015622849.1">
    <property type="nucleotide sequence ID" value="XM_015767363.1"/>
</dbReference>
<dbReference type="SMR" id="Q6EPN8"/>
<dbReference type="FunCoup" id="Q6EPN8">
    <property type="interactions" value="3599"/>
</dbReference>
<dbReference type="STRING" id="39947.Q6EPN8"/>
<dbReference type="PaxDb" id="39947-Q6EPN8"/>
<dbReference type="EnsemblPlants" id="Os02t0680400-01">
    <property type="protein sequence ID" value="Os02t0680400-01"/>
    <property type="gene ID" value="Os02g0680400"/>
</dbReference>
<dbReference type="Gramene" id="Os02t0680400-01">
    <property type="protein sequence ID" value="Os02t0680400-01"/>
    <property type="gene ID" value="Os02g0680400"/>
</dbReference>
<dbReference type="KEGG" id="dosa:Os02g0680400"/>
<dbReference type="eggNOG" id="KOG2719">
    <property type="taxonomic scope" value="Eukaryota"/>
</dbReference>
<dbReference type="HOGENOM" id="CLU_025947_3_3_1"/>
<dbReference type="InParanoid" id="Q6EPN8"/>
<dbReference type="OMA" id="FVIEEKF"/>
<dbReference type="OrthoDB" id="360839at2759"/>
<dbReference type="Proteomes" id="UP000000763">
    <property type="component" value="Chromosome 2"/>
</dbReference>
<dbReference type="Proteomes" id="UP000007752">
    <property type="component" value="Chromosome 2"/>
</dbReference>
<dbReference type="Proteomes" id="UP000059680">
    <property type="component" value="Chromosome 2"/>
</dbReference>
<dbReference type="ExpressionAtlas" id="Q6EPN8">
    <property type="expression patterns" value="baseline and differential"/>
</dbReference>
<dbReference type="GO" id="GO:0005789">
    <property type="term" value="C:endoplasmic reticulum membrane"/>
    <property type="evidence" value="ECO:0000318"/>
    <property type="project" value="GO_Central"/>
</dbReference>
<dbReference type="GO" id="GO:0046872">
    <property type="term" value="F:metal ion binding"/>
    <property type="evidence" value="ECO:0007669"/>
    <property type="project" value="UniProtKB-KW"/>
</dbReference>
<dbReference type="GO" id="GO:0004222">
    <property type="term" value="F:metalloendopeptidase activity"/>
    <property type="evidence" value="ECO:0000318"/>
    <property type="project" value="GO_Central"/>
</dbReference>
<dbReference type="GO" id="GO:0071586">
    <property type="term" value="P:CAAX-box protein processing"/>
    <property type="evidence" value="ECO:0000318"/>
    <property type="project" value="GO_Central"/>
</dbReference>
<dbReference type="CDD" id="cd07343">
    <property type="entry name" value="M48A_Zmpste24p_like"/>
    <property type="match status" value="1"/>
</dbReference>
<dbReference type="FunFam" id="3.30.2010.10:FF:000005">
    <property type="entry name" value="CAAX prenyl protease"/>
    <property type="match status" value="1"/>
</dbReference>
<dbReference type="Gene3D" id="3.30.2010.10">
    <property type="entry name" value="Metalloproteases ('zincins'), catalytic domain"/>
    <property type="match status" value="1"/>
</dbReference>
<dbReference type="InterPro" id="IPR027057">
    <property type="entry name" value="CAXX_Prtase_1"/>
</dbReference>
<dbReference type="InterPro" id="IPR001915">
    <property type="entry name" value="Peptidase_M48"/>
</dbReference>
<dbReference type="InterPro" id="IPR032456">
    <property type="entry name" value="Peptidase_M48_N"/>
</dbReference>
<dbReference type="PANTHER" id="PTHR10120">
    <property type="entry name" value="CAAX PRENYL PROTEASE 1"/>
    <property type="match status" value="1"/>
</dbReference>
<dbReference type="Pfam" id="PF01435">
    <property type="entry name" value="Peptidase_M48"/>
    <property type="match status" value="1"/>
</dbReference>
<dbReference type="Pfam" id="PF16491">
    <property type="entry name" value="Peptidase_M48_N"/>
    <property type="match status" value="1"/>
</dbReference>
<sequence length="425" mass="48438">MALPYLEAVLCFMILMYIFETYLDIRQHRALKLPTLPKPLVGVISGEKFERSRAYSLDKSKFHFIHEAVTILMDTTILYYRVLPWVWKKSGELATNAGLNAENEILHTLAFLAGVMIWSQITDLPFSLYSTFVIEAKHGFNKQTIWLFIRDMIKGILLSILLGPPIVAAIIIIVQNGGPYLAIYLWGFMFALSLVMMTIYPIVIAPLFNKFTPLPEGVLREKIEKLAASLSFPLKKLFVVDGSTRSSHSNAYMYGFFKNKRIVLYDTLIQQCSSEDEIVSVIAHELGHWKLNHTVYSFVAVQLLMFLQFGGYTLVRNSKDLFESFGFEDQPVIIGLIIFQHTIIPVQHLLSFCLNLVSRAFEFQADAFAKNLGYAPQLRAALVKLQEENLSAMNTDPWYSAYHYSHPPLVERLSALEDADSKKEN</sequence>
<name>FACE1_ORYSJ</name>
<feature type="chain" id="PRO_0000356241" description="CAAX prenyl protease 1 homolog">
    <location>
        <begin position="1"/>
        <end position="425"/>
    </location>
</feature>
<feature type="transmembrane region" description="Helical" evidence="2">
    <location>
        <begin position="3"/>
        <end position="23"/>
    </location>
</feature>
<feature type="transmembrane region" description="Helical" evidence="2">
    <location>
        <begin position="62"/>
        <end position="80"/>
    </location>
</feature>
<feature type="transmembrane region" description="Helical" evidence="2">
    <location>
        <begin position="109"/>
        <end position="129"/>
    </location>
</feature>
<feature type="transmembrane region" description="Helical" evidence="2">
    <location>
        <begin position="155"/>
        <end position="175"/>
    </location>
</feature>
<feature type="transmembrane region" description="Helical" evidence="2">
    <location>
        <begin position="188"/>
        <end position="208"/>
    </location>
</feature>
<feature type="transmembrane region" description="Helical" evidence="2">
    <location>
        <begin position="295"/>
        <end position="315"/>
    </location>
</feature>
<feature type="transmembrane region" description="Helical" evidence="2">
    <location>
        <begin position="332"/>
        <end position="352"/>
    </location>
</feature>
<feature type="active site" evidence="1">
    <location>
        <position position="285"/>
    </location>
</feature>
<feature type="active site" description="Proton donor" evidence="1">
    <location>
        <position position="366"/>
    </location>
</feature>
<feature type="binding site" evidence="1">
    <location>
        <position position="284"/>
    </location>
    <ligand>
        <name>Zn(2+)</name>
        <dbReference type="ChEBI" id="CHEBI:29105"/>
        <note>catalytic</note>
    </ligand>
</feature>
<feature type="binding site" evidence="1">
    <location>
        <position position="288"/>
    </location>
    <ligand>
        <name>Zn(2+)</name>
        <dbReference type="ChEBI" id="CHEBI:29105"/>
        <note>catalytic</note>
    </ligand>
</feature>
<feature type="binding site" evidence="1">
    <location>
        <position position="362"/>
    </location>
    <ligand>
        <name>Zn(2+)</name>
        <dbReference type="ChEBI" id="CHEBI:29105"/>
        <note>catalytic</note>
    </ligand>
</feature>
<feature type="sequence conflict" description="In Ref. 5; AK102210." evidence="3" ref="5">
    <original>I</original>
    <variation>V</variation>
    <location>
        <position position="153"/>
    </location>
</feature>
<feature type="sequence conflict" description="In Ref. 5; AK102210." evidence="3" ref="5">
    <original>T</original>
    <variation>A</variation>
    <location>
        <position position="198"/>
    </location>
</feature>